<gene>
    <name type="primary">SUB2</name>
    <name type="ORF">CIMG_10056</name>
</gene>
<protein>
    <recommendedName>
        <fullName>ATP-dependent RNA helicase SUB2</fullName>
        <ecNumber>3.6.4.13</ecNumber>
    </recommendedName>
</protein>
<sequence length="443" mass="49716">MSHEEDLIDYSDEELQTTDAAAAAATAAAAANGAAVKKGDLTVSGARADKKGSYVGVHSTGFRDFLLKPELLRAITDCGFEHPSEVQQVCIPTAILKVDVLCQAKSGLGKTAVFVLTTLNQLEPVPGECSILVMCHTRELAYQIKNEYARFSKYLPDVKTAVFYGGTPMQKDIEVLSSKDTYPNIVVGTPGRLNALVREKKLSLRNIKAFVLDECDKMLDQIDMRRDVQEIFRSTPADKQVMMFSATLSQEIRPICKKFMRNPLEVYVDDDTKLTLHGLQQYYIKLSEAEKNRKLNELLDNLEFNQVIIFVKSTLRANELDKLLRECNFPSIAVHSGVSQEERIKRYKEFKEFNKRICVATDVFGRGIDIERINLAINYDMPADADSYLHRVGRAGRFGTKGLSISFVSSEDDMKTLKDIEKRFEVALPEYPEEGVDASTYMA</sequence>
<organism>
    <name type="scientific">Coccidioides immitis (strain RS)</name>
    <name type="common">Valley fever fungus</name>
    <dbReference type="NCBI Taxonomy" id="246410"/>
    <lineage>
        <taxon>Eukaryota</taxon>
        <taxon>Fungi</taxon>
        <taxon>Dikarya</taxon>
        <taxon>Ascomycota</taxon>
        <taxon>Pezizomycotina</taxon>
        <taxon>Eurotiomycetes</taxon>
        <taxon>Eurotiomycetidae</taxon>
        <taxon>Onygenales</taxon>
        <taxon>Onygenaceae</taxon>
        <taxon>Coccidioides</taxon>
    </lineage>
</organism>
<accession>Q1DI07</accession>
<accession>J3K011</accession>
<reference key="1">
    <citation type="journal article" date="2009" name="Genome Res.">
        <title>Comparative genomic analyses of the human fungal pathogens Coccidioides and their relatives.</title>
        <authorList>
            <person name="Sharpton T.J."/>
            <person name="Stajich J.E."/>
            <person name="Rounsley S.D."/>
            <person name="Gardner M.J."/>
            <person name="Wortman J.R."/>
            <person name="Jordar V.S."/>
            <person name="Maiti R."/>
            <person name="Kodira C.D."/>
            <person name="Neafsey D.E."/>
            <person name="Zeng Q."/>
            <person name="Hung C.-Y."/>
            <person name="McMahan C."/>
            <person name="Muszewska A."/>
            <person name="Grynberg M."/>
            <person name="Mandel M.A."/>
            <person name="Kellner E.M."/>
            <person name="Barker B.M."/>
            <person name="Galgiani J.N."/>
            <person name="Orbach M.J."/>
            <person name="Kirkland T.N."/>
            <person name="Cole G.T."/>
            <person name="Henn M.R."/>
            <person name="Birren B.W."/>
            <person name="Taylor J.W."/>
        </authorList>
    </citation>
    <scope>NUCLEOTIDE SEQUENCE [LARGE SCALE GENOMIC DNA]</scope>
    <source>
        <strain>RS</strain>
    </source>
</reference>
<reference key="2">
    <citation type="journal article" date="2010" name="Genome Res.">
        <title>Population genomic sequencing of Coccidioides fungi reveals recent hybridization and transposon control.</title>
        <authorList>
            <person name="Neafsey D.E."/>
            <person name="Barker B.M."/>
            <person name="Sharpton T.J."/>
            <person name="Stajich J.E."/>
            <person name="Park D.J."/>
            <person name="Whiston E."/>
            <person name="Hung C.-Y."/>
            <person name="McMahan C."/>
            <person name="White J."/>
            <person name="Sykes S."/>
            <person name="Heiman D."/>
            <person name="Young S."/>
            <person name="Zeng Q."/>
            <person name="Abouelleil A."/>
            <person name="Aftuck L."/>
            <person name="Bessette D."/>
            <person name="Brown A."/>
            <person name="FitzGerald M."/>
            <person name="Lui A."/>
            <person name="Macdonald J.P."/>
            <person name="Priest M."/>
            <person name="Orbach M.J."/>
            <person name="Galgiani J.N."/>
            <person name="Kirkland T.N."/>
            <person name="Cole G.T."/>
            <person name="Birren B.W."/>
            <person name="Henn M.R."/>
            <person name="Taylor J.W."/>
            <person name="Rounsley S.D."/>
        </authorList>
    </citation>
    <scope>GENOME REANNOTATION</scope>
    <source>
        <strain>RS</strain>
    </source>
</reference>
<feature type="chain" id="PRO_0000256031" description="ATP-dependent RNA helicase SUB2">
    <location>
        <begin position="1"/>
        <end position="443"/>
    </location>
</feature>
<feature type="domain" description="Helicase ATP-binding" evidence="2">
    <location>
        <begin position="91"/>
        <end position="266"/>
    </location>
</feature>
<feature type="domain" description="Helicase C-terminal" evidence="3">
    <location>
        <begin position="294"/>
        <end position="439"/>
    </location>
</feature>
<feature type="short sequence motif" description="Q motif">
    <location>
        <begin position="60"/>
        <end position="88"/>
    </location>
</feature>
<feature type="short sequence motif" description="DEAD box">
    <location>
        <begin position="213"/>
        <end position="216"/>
    </location>
</feature>
<feature type="binding site" evidence="2">
    <location>
        <begin position="104"/>
        <end position="111"/>
    </location>
    <ligand>
        <name>ATP</name>
        <dbReference type="ChEBI" id="CHEBI:30616"/>
    </ligand>
</feature>
<comment type="function">
    <text evidence="1">ATP-binding RNA helicase involved in transcription elongation and required for the export of mRNA out of the nucleus. SUB2 also plays a role in pre-mRNA splicing and spliceosome assembly. May be involved in rDNA and telomeric silencing, and maintenance of genome integrity (By similarity).</text>
</comment>
<comment type="catalytic activity">
    <reaction>
        <text>ATP + H2O = ADP + phosphate + H(+)</text>
        <dbReference type="Rhea" id="RHEA:13065"/>
        <dbReference type="ChEBI" id="CHEBI:15377"/>
        <dbReference type="ChEBI" id="CHEBI:15378"/>
        <dbReference type="ChEBI" id="CHEBI:30616"/>
        <dbReference type="ChEBI" id="CHEBI:43474"/>
        <dbReference type="ChEBI" id="CHEBI:456216"/>
        <dbReference type="EC" id="3.6.4.13"/>
    </reaction>
</comment>
<comment type="subcellular location">
    <subcellularLocation>
        <location evidence="1">Nucleus</location>
    </subcellularLocation>
</comment>
<comment type="domain">
    <text>The Q motif is unique to and characteristic of the DEAD box family of RNA helicases and controls ATP binding and hydrolysis.</text>
</comment>
<comment type="similarity">
    <text evidence="4">Belongs to the DEAD box helicase family. DECD subfamily.</text>
</comment>
<name>SUB2_COCIM</name>
<proteinExistence type="inferred from homology"/>
<keyword id="KW-0067">ATP-binding</keyword>
<keyword id="KW-0347">Helicase</keyword>
<keyword id="KW-0378">Hydrolase</keyword>
<keyword id="KW-0507">mRNA processing</keyword>
<keyword id="KW-0508">mRNA splicing</keyword>
<keyword id="KW-0509">mRNA transport</keyword>
<keyword id="KW-0547">Nucleotide-binding</keyword>
<keyword id="KW-0539">Nucleus</keyword>
<keyword id="KW-1185">Reference proteome</keyword>
<keyword id="KW-0694">RNA-binding</keyword>
<keyword id="KW-0747">Spliceosome</keyword>
<keyword id="KW-0813">Transport</keyword>
<evidence type="ECO:0000250" key="1"/>
<evidence type="ECO:0000255" key="2">
    <source>
        <dbReference type="PROSITE-ProRule" id="PRU00541"/>
    </source>
</evidence>
<evidence type="ECO:0000255" key="3">
    <source>
        <dbReference type="PROSITE-ProRule" id="PRU00542"/>
    </source>
</evidence>
<evidence type="ECO:0000305" key="4"/>
<dbReference type="EC" id="3.6.4.13"/>
<dbReference type="EMBL" id="GG704915">
    <property type="protein sequence ID" value="EAS27451.3"/>
    <property type="molecule type" value="Genomic_DNA"/>
</dbReference>
<dbReference type="RefSeq" id="XP_001239034.1">
    <property type="nucleotide sequence ID" value="XM_001239033.2"/>
</dbReference>
<dbReference type="SMR" id="Q1DI07"/>
<dbReference type="FunCoup" id="Q1DI07">
    <property type="interactions" value="1197"/>
</dbReference>
<dbReference type="STRING" id="246410.Q1DI07"/>
<dbReference type="GeneID" id="4557925"/>
<dbReference type="KEGG" id="cim:CIMG_10056"/>
<dbReference type="VEuPathDB" id="FungiDB:CIMG_10056"/>
<dbReference type="InParanoid" id="Q1DI07"/>
<dbReference type="OMA" id="YAHVEPK"/>
<dbReference type="OrthoDB" id="10265785at2759"/>
<dbReference type="Proteomes" id="UP000001261">
    <property type="component" value="Unassembled WGS sequence"/>
</dbReference>
<dbReference type="GO" id="GO:0005681">
    <property type="term" value="C:spliceosomal complex"/>
    <property type="evidence" value="ECO:0007669"/>
    <property type="project" value="UniProtKB-KW"/>
</dbReference>
<dbReference type="GO" id="GO:0005524">
    <property type="term" value="F:ATP binding"/>
    <property type="evidence" value="ECO:0007669"/>
    <property type="project" value="UniProtKB-KW"/>
</dbReference>
<dbReference type="GO" id="GO:0016887">
    <property type="term" value="F:ATP hydrolysis activity"/>
    <property type="evidence" value="ECO:0007669"/>
    <property type="project" value="RHEA"/>
</dbReference>
<dbReference type="GO" id="GO:0003723">
    <property type="term" value="F:RNA binding"/>
    <property type="evidence" value="ECO:0007669"/>
    <property type="project" value="UniProtKB-KW"/>
</dbReference>
<dbReference type="GO" id="GO:0003724">
    <property type="term" value="F:RNA helicase activity"/>
    <property type="evidence" value="ECO:0007669"/>
    <property type="project" value="UniProtKB-EC"/>
</dbReference>
<dbReference type="GO" id="GO:0006397">
    <property type="term" value="P:mRNA processing"/>
    <property type="evidence" value="ECO:0007669"/>
    <property type="project" value="UniProtKB-KW"/>
</dbReference>
<dbReference type="GO" id="GO:0051028">
    <property type="term" value="P:mRNA transport"/>
    <property type="evidence" value="ECO:0007669"/>
    <property type="project" value="UniProtKB-KW"/>
</dbReference>
<dbReference type="GO" id="GO:0008380">
    <property type="term" value="P:RNA splicing"/>
    <property type="evidence" value="ECO:0007669"/>
    <property type="project" value="UniProtKB-KW"/>
</dbReference>
<dbReference type="CDD" id="cd17950">
    <property type="entry name" value="DEADc_DDX39"/>
    <property type="match status" value="1"/>
</dbReference>
<dbReference type="CDD" id="cd18787">
    <property type="entry name" value="SF2_C_DEAD"/>
    <property type="match status" value="1"/>
</dbReference>
<dbReference type="FunFam" id="3.40.50.300:FF:000111">
    <property type="entry name" value="DEAD-box ATP-dependent RNA helicase"/>
    <property type="match status" value="1"/>
</dbReference>
<dbReference type="FunFam" id="3.40.50.300:FF:000168">
    <property type="entry name" value="DEAD-box ATP-dependent RNA helicase 56-like"/>
    <property type="match status" value="1"/>
</dbReference>
<dbReference type="Gene3D" id="3.40.50.300">
    <property type="entry name" value="P-loop containing nucleotide triphosphate hydrolases"/>
    <property type="match status" value="2"/>
</dbReference>
<dbReference type="InterPro" id="IPR011545">
    <property type="entry name" value="DEAD/DEAH_box_helicase_dom"/>
</dbReference>
<dbReference type="InterPro" id="IPR014001">
    <property type="entry name" value="Helicase_ATP-bd"/>
</dbReference>
<dbReference type="InterPro" id="IPR001650">
    <property type="entry name" value="Helicase_C-like"/>
</dbReference>
<dbReference type="InterPro" id="IPR027417">
    <property type="entry name" value="P-loop_NTPase"/>
</dbReference>
<dbReference type="InterPro" id="IPR014014">
    <property type="entry name" value="RNA_helicase_DEAD_Q_motif"/>
</dbReference>
<dbReference type="PANTHER" id="PTHR47958">
    <property type="entry name" value="ATP-DEPENDENT RNA HELICASE DBP3"/>
    <property type="match status" value="1"/>
</dbReference>
<dbReference type="Pfam" id="PF00270">
    <property type="entry name" value="DEAD"/>
    <property type="match status" value="1"/>
</dbReference>
<dbReference type="Pfam" id="PF00271">
    <property type="entry name" value="Helicase_C"/>
    <property type="match status" value="1"/>
</dbReference>
<dbReference type="SMART" id="SM00487">
    <property type="entry name" value="DEXDc"/>
    <property type="match status" value="1"/>
</dbReference>
<dbReference type="SMART" id="SM00490">
    <property type="entry name" value="HELICc"/>
    <property type="match status" value="1"/>
</dbReference>
<dbReference type="SUPFAM" id="SSF52540">
    <property type="entry name" value="P-loop containing nucleoside triphosphate hydrolases"/>
    <property type="match status" value="1"/>
</dbReference>
<dbReference type="PROSITE" id="PS51192">
    <property type="entry name" value="HELICASE_ATP_BIND_1"/>
    <property type="match status" value="1"/>
</dbReference>
<dbReference type="PROSITE" id="PS51194">
    <property type="entry name" value="HELICASE_CTER"/>
    <property type="match status" value="1"/>
</dbReference>
<dbReference type="PROSITE" id="PS51195">
    <property type="entry name" value="Q_MOTIF"/>
    <property type="match status" value="1"/>
</dbReference>